<organism>
    <name type="scientific">Histophilus somni (strain 129Pt)</name>
    <name type="common">Haemophilus somnus</name>
    <dbReference type="NCBI Taxonomy" id="205914"/>
    <lineage>
        <taxon>Bacteria</taxon>
        <taxon>Pseudomonadati</taxon>
        <taxon>Pseudomonadota</taxon>
        <taxon>Gammaproteobacteria</taxon>
        <taxon>Pasteurellales</taxon>
        <taxon>Pasteurellaceae</taxon>
        <taxon>Histophilus</taxon>
    </lineage>
</organism>
<keyword id="KW-0050">Antiport</keyword>
<keyword id="KW-0997">Cell inner membrane</keyword>
<keyword id="KW-1003">Cell membrane</keyword>
<keyword id="KW-0406">Ion transport</keyword>
<keyword id="KW-0472">Membrane</keyword>
<keyword id="KW-0915">Sodium</keyword>
<keyword id="KW-0739">Sodium transport</keyword>
<keyword id="KW-0812">Transmembrane</keyword>
<keyword id="KW-1133">Transmembrane helix</keyword>
<keyword id="KW-0813">Transport</keyword>
<accession>Q0I3A2</accession>
<gene>
    <name evidence="1" type="primary">nhaA</name>
    <name type="ordered locus">HS_0963</name>
</gene>
<proteinExistence type="inferred from homology"/>
<dbReference type="EMBL" id="CP000436">
    <property type="protein sequence ID" value="ABI25238.1"/>
    <property type="molecule type" value="Genomic_DNA"/>
</dbReference>
<dbReference type="SMR" id="Q0I3A2"/>
<dbReference type="KEGG" id="hso:HS_0963"/>
<dbReference type="eggNOG" id="COG3004">
    <property type="taxonomic scope" value="Bacteria"/>
</dbReference>
<dbReference type="HOGENOM" id="CLU_015803_1_0_6"/>
<dbReference type="GO" id="GO:0005886">
    <property type="term" value="C:plasma membrane"/>
    <property type="evidence" value="ECO:0007669"/>
    <property type="project" value="UniProtKB-SubCell"/>
</dbReference>
<dbReference type="GO" id="GO:0015385">
    <property type="term" value="F:sodium:proton antiporter activity"/>
    <property type="evidence" value="ECO:0007669"/>
    <property type="project" value="TreeGrafter"/>
</dbReference>
<dbReference type="GO" id="GO:0006885">
    <property type="term" value="P:regulation of pH"/>
    <property type="evidence" value="ECO:0007669"/>
    <property type="project" value="InterPro"/>
</dbReference>
<dbReference type="Gene3D" id="1.20.1530.10">
    <property type="entry name" value="Na+/H+ antiporter like domain"/>
    <property type="match status" value="1"/>
</dbReference>
<dbReference type="HAMAP" id="MF_01844">
    <property type="entry name" value="NhaA"/>
    <property type="match status" value="1"/>
</dbReference>
<dbReference type="InterPro" id="IPR023171">
    <property type="entry name" value="Na/H_antiporter_dom_sf"/>
</dbReference>
<dbReference type="InterPro" id="IPR004670">
    <property type="entry name" value="NhaA"/>
</dbReference>
<dbReference type="NCBIfam" id="TIGR00773">
    <property type="entry name" value="NhaA"/>
    <property type="match status" value="1"/>
</dbReference>
<dbReference type="NCBIfam" id="NF007111">
    <property type="entry name" value="PRK09560.1"/>
    <property type="match status" value="1"/>
</dbReference>
<dbReference type="NCBIfam" id="NF007112">
    <property type="entry name" value="PRK09561.1"/>
    <property type="match status" value="1"/>
</dbReference>
<dbReference type="PANTHER" id="PTHR30341:SF0">
    <property type="entry name" value="NA(+)_H(+) ANTIPORTER NHAA"/>
    <property type="match status" value="1"/>
</dbReference>
<dbReference type="PANTHER" id="PTHR30341">
    <property type="entry name" value="SODIUM ION/PROTON ANTIPORTER NHAA-RELATED"/>
    <property type="match status" value="1"/>
</dbReference>
<dbReference type="Pfam" id="PF06965">
    <property type="entry name" value="Na_H_antiport_1"/>
    <property type="match status" value="1"/>
</dbReference>
<sequence length="395" mass="42272">MTEKIRECIRQFLQMEAAGGILLLVFSVGAVIFANSPLRDHYFSFLNAPVIIQFGSIVELNKPLLMWVNDGFMAIFFVLVGLEVKREMLIGAISSYQKAIFPAIAACGGMIVPALVYWLVNQGVPDYHGGWAIPMATDIAFAIGVLVLLGTRVPLALKVFLLALAIIDDLGAIIVIALFFSHDLSTKALILASIAIVGLILLNRFKVSNLIAYVVVGIILWVSVLKSGVHATLAGVIIGFCVPLKGKNNSEPLVEMEHAIAPWSSFLILPLFAFCNAGIPLSGLGMEALTSPLTLGVTLGLLLGKPIGVFLFSYLSVKLHIAKLPEGINFKQIFAVSVLCGIGFTMSMFLASLAFGGGDGHLTAYARLGILFGSSVSAVVGYWLLFVTTKENANQ</sequence>
<evidence type="ECO:0000255" key="1">
    <source>
        <dbReference type="HAMAP-Rule" id="MF_01844"/>
    </source>
</evidence>
<comment type="function">
    <text evidence="1">Na(+)/H(+) antiporter that extrudes sodium in exchange for external protons.</text>
</comment>
<comment type="catalytic activity">
    <reaction evidence="1">
        <text>Na(+)(in) + 2 H(+)(out) = Na(+)(out) + 2 H(+)(in)</text>
        <dbReference type="Rhea" id="RHEA:29251"/>
        <dbReference type="ChEBI" id="CHEBI:15378"/>
        <dbReference type="ChEBI" id="CHEBI:29101"/>
    </reaction>
    <physiologicalReaction direction="left-to-right" evidence="1">
        <dbReference type="Rhea" id="RHEA:29252"/>
    </physiologicalReaction>
</comment>
<comment type="subcellular location">
    <subcellularLocation>
        <location evidence="1">Cell inner membrane</location>
        <topology evidence="1">Multi-pass membrane protein</topology>
    </subcellularLocation>
</comment>
<comment type="similarity">
    <text evidence="1">Belongs to the NhaA Na(+)/H(+) (TC 2.A.33) antiporter family.</text>
</comment>
<protein>
    <recommendedName>
        <fullName evidence="1">Na(+)/H(+) antiporter NhaA</fullName>
    </recommendedName>
    <alternativeName>
        <fullName evidence="1">Sodium/proton antiporter NhaA</fullName>
    </alternativeName>
</protein>
<feature type="chain" id="PRO_0000334316" description="Na(+)/H(+) antiporter NhaA">
    <location>
        <begin position="1"/>
        <end position="395"/>
    </location>
</feature>
<feature type="transmembrane region" description="Helical" evidence="1">
    <location>
        <begin position="18"/>
        <end position="38"/>
    </location>
</feature>
<feature type="transmembrane region" description="Helical" evidence="1">
    <location>
        <begin position="64"/>
        <end position="84"/>
    </location>
</feature>
<feature type="transmembrane region" description="Helical" evidence="1">
    <location>
        <begin position="100"/>
        <end position="120"/>
    </location>
</feature>
<feature type="transmembrane region" description="Helical" evidence="1">
    <location>
        <begin position="129"/>
        <end position="149"/>
    </location>
</feature>
<feature type="transmembrane region" description="Helical" evidence="1">
    <location>
        <begin position="160"/>
        <end position="180"/>
    </location>
</feature>
<feature type="transmembrane region" description="Helical" evidence="1">
    <location>
        <begin position="182"/>
        <end position="202"/>
    </location>
</feature>
<feature type="transmembrane region" description="Helical" evidence="1">
    <location>
        <begin position="205"/>
        <end position="225"/>
    </location>
</feature>
<feature type="transmembrane region" description="Helical" evidence="1">
    <location>
        <begin position="226"/>
        <end position="246"/>
    </location>
</feature>
<feature type="transmembrane region" description="Helical" evidence="1">
    <location>
        <begin position="266"/>
        <end position="286"/>
    </location>
</feature>
<feature type="transmembrane region" description="Helical" evidence="1">
    <location>
        <begin position="295"/>
        <end position="315"/>
    </location>
</feature>
<feature type="transmembrane region" description="Helical" evidence="1">
    <location>
        <begin position="333"/>
        <end position="353"/>
    </location>
</feature>
<feature type="transmembrane region" description="Helical" evidence="1">
    <location>
        <begin position="368"/>
        <end position="388"/>
    </location>
</feature>
<name>NHAA_HISS1</name>
<reference key="1">
    <citation type="journal article" date="2007" name="J. Bacteriol.">
        <title>Complete genome sequence of Haemophilus somnus (Histophilus somni) strain 129Pt and comparison to Haemophilus ducreyi 35000HP and Haemophilus influenzae Rd.</title>
        <authorList>
            <person name="Challacombe J.F."/>
            <person name="Duncan A.J."/>
            <person name="Brettin T.S."/>
            <person name="Bruce D."/>
            <person name="Chertkov O."/>
            <person name="Detter J.C."/>
            <person name="Han C.S."/>
            <person name="Misra M."/>
            <person name="Richardson P."/>
            <person name="Tapia R."/>
            <person name="Thayer N."/>
            <person name="Xie G."/>
            <person name="Inzana T.J."/>
        </authorList>
    </citation>
    <scope>NUCLEOTIDE SEQUENCE [LARGE SCALE GENOMIC DNA]</scope>
    <source>
        <strain>129Pt</strain>
    </source>
</reference>